<accession>A5FN18</accession>
<gene>
    <name evidence="1" type="primary">rpsM</name>
    <name type="ordered locus">Fjoh_0374</name>
</gene>
<reference key="1">
    <citation type="journal article" date="2009" name="Appl. Environ. Microbiol.">
        <title>Novel features of the polysaccharide-digesting gliding bacterium Flavobacterium johnsoniae as revealed by genome sequence analysis.</title>
        <authorList>
            <person name="McBride M.J."/>
            <person name="Xie G."/>
            <person name="Martens E.C."/>
            <person name="Lapidus A."/>
            <person name="Henrissat B."/>
            <person name="Rhodes R.G."/>
            <person name="Goltsman E."/>
            <person name="Wang W."/>
            <person name="Xu J."/>
            <person name="Hunnicutt D.W."/>
            <person name="Staroscik A.M."/>
            <person name="Hoover T.R."/>
            <person name="Cheng Y.Q."/>
            <person name="Stein J.L."/>
        </authorList>
    </citation>
    <scope>NUCLEOTIDE SEQUENCE [LARGE SCALE GENOMIC DNA]</scope>
    <source>
        <strain>ATCC 17061 / DSM 2064 / JCM 8514 / BCRC 14874 / CCUG 350202 / NBRC 14942 / NCIMB 11054 / UW101</strain>
    </source>
</reference>
<keyword id="KW-0687">Ribonucleoprotein</keyword>
<keyword id="KW-0689">Ribosomal protein</keyword>
<keyword id="KW-0694">RNA-binding</keyword>
<keyword id="KW-0699">rRNA-binding</keyword>
<keyword id="KW-0820">tRNA-binding</keyword>
<comment type="function">
    <text evidence="1">Located at the top of the head of the 30S subunit, it contacts several helices of the 16S rRNA. In the 70S ribosome it contacts the 23S rRNA (bridge B1a) and protein L5 of the 50S subunit (bridge B1b), connecting the 2 subunits; these bridges are implicated in subunit movement. Contacts the tRNAs in the A and P-sites.</text>
</comment>
<comment type="subunit">
    <text evidence="1">Part of the 30S ribosomal subunit. Forms a loose heterodimer with protein S19. Forms two bridges to the 50S subunit in the 70S ribosome.</text>
</comment>
<comment type="similarity">
    <text evidence="1">Belongs to the universal ribosomal protein uS13 family.</text>
</comment>
<dbReference type="EMBL" id="CP000685">
    <property type="protein sequence ID" value="ABQ03410.1"/>
    <property type="molecule type" value="Genomic_DNA"/>
</dbReference>
<dbReference type="RefSeq" id="WP_012022478.1">
    <property type="nucleotide sequence ID" value="NZ_MUGZ01000005.1"/>
</dbReference>
<dbReference type="SMR" id="A5FN18"/>
<dbReference type="STRING" id="376686.Fjoh_0374"/>
<dbReference type="KEGG" id="fjo:Fjoh_0374"/>
<dbReference type="eggNOG" id="COG0099">
    <property type="taxonomic scope" value="Bacteria"/>
</dbReference>
<dbReference type="HOGENOM" id="CLU_103849_1_2_10"/>
<dbReference type="OrthoDB" id="9803610at2"/>
<dbReference type="Proteomes" id="UP000006694">
    <property type="component" value="Chromosome"/>
</dbReference>
<dbReference type="GO" id="GO:0005829">
    <property type="term" value="C:cytosol"/>
    <property type="evidence" value="ECO:0007669"/>
    <property type="project" value="TreeGrafter"/>
</dbReference>
<dbReference type="GO" id="GO:0015935">
    <property type="term" value="C:small ribosomal subunit"/>
    <property type="evidence" value="ECO:0007669"/>
    <property type="project" value="TreeGrafter"/>
</dbReference>
<dbReference type="GO" id="GO:0019843">
    <property type="term" value="F:rRNA binding"/>
    <property type="evidence" value="ECO:0007669"/>
    <property type="project" value="UniProtKB-UniRule"/>
</dbReference>
<dbReference type="GO" id="GO:0003735">
    <property type="term" value="F:structural constituent of ribosome"/>
    <property type="evidence" value="ECO:0007669"/>
    <property type="project" value="InterPro"/>
</dbReference>
<dbReference type="GO" id="GO:0000049">
    <property type="term" value="F:tRNA binding"/>
    <property type="evidence" value="ECO:0007669"/>
    <property type="project" value="UniProtKB-UniRule"/>
</dbReference>
<dbReference type="GO" id="GO:0006412">
    <property type="term" value="P:translation"/>
    <property type="evidence" value="ECO:0007669"/>
    <property type="project" value="UniProtKB-UniRule"/>
</dbReference>
<dbReference type="FunFam" id="1.10.8.50:FF:000001">
    <property type="entry name" value="30S ribosomal protein S13"/>
    <property type="match status" value="1"/>
</dbReference>
<dbReference type="FunFam" id="4.10.910.10:FF:000001">
    <property type="entry name" value="30S ribosomal protein S13"/>
    <property type="match status" value="1"/>
</dbReference>
<dbReference type="Gene3D" id="1.10.8.50">
    <property type="match status" value="1"/>
</dbReference>
<dbReference type="Gene3D" id="4.10.910.10">
    <property type="entry name" value="30s ribosomal protein s13, domain 2"/>
    <property type="match status" value="1"/>
</dbReference>
<dbReference type="HAMAP" id="MF_01315">
    <property type="entry name" value="Ribosomal_uS13"/>
    <property type="match status" value="1"/>
</dbReference>
<dbReference type="InterPro" id="IPR027437">
    <property type="entry name" value="Rbsml_uS13_C"/>
</dbReference>
<dbReference type="InterPro" id="IPR001892">
    <property type="entry name" value="Ribosomal_uS13"/>
</dbReference>
<dbReference type="InterPro" id="IPR010979">
    <property type="entry name" value="Ribosomal_uS13-like_H2TH"/>
</dbReference>
<dbReference type="InterPro" id="IPR019980">
    <property type="entry name" value="Ribosomal_uS13_bac-type"/>
</dbReference>
<dbReference type="InterPro" id="IPR018269">
    <property type="entry name" value="Ribosomal_uS13_CS"/>
</dbReference>
<dbReference type="NCBIfam" id="TIGR03631">
    <property type="entry name" value="uS13_bact"/>
    <property type="match status" value="1"/>
</dbReference>
<dbReference type="PANTHER" id="PTHR10871">
    <property type="entry name" value="30S RIBOSOMAL PROTEIN S13/40S RIBOSOMAL PROTEIN S18"/>
    <property type="match status" value="1"/>
</dbReference>
<dbReference type="PANTHER" id="PTHR10871:SF1">
    <property type="entry name" value="SMALL RIBOSOMAL SUBUNIT PROTEIN US13M"/>
    <property type="match status" value="1"/>
</dbReference>
<dbReference type="Pfam" id="PF00416">
    <property type="entry name" value="Ribosomal_S13"/>
    <property type="match status" value="2"/>
</dbReference>
<dbReference type="PIRSF" id="PIRSF002134">
    <property type="entry name" value="Ribosomal_S13"/>
    <property type="match status" value="1"/>
</dbReference>
<dbReference type="SUPFAM" id="SSF46946">
    <property type="entry name" value="S13-like H2TH domain"/>
    <property type="match status" value="1"/>
</dbReference>
<dbReference type="PROSITE" id="PS00646">
    <property type="entry name" value="RIBOSOMAL_S13_1"/>
    <property type="match status" value="1"/>
</dbReference>
<dbReference type="PROSITE" id="PS50159">
    <property type="entry name" value="RIBOSOMAL_S13_2"/>
    <property type="match status" value="1"/>
</dbReference>
<proteinExistence type="inferred from homology"/>
<feature type="chain" id="PRO_1000086239" description="Small ribosomal subunit protein uS13">
    <location>
        <begin position="1"/>
        <end position="124"/>
    </location>
</feature>
<feature type="region of interest" description="Disordered" evidence="2">
    <location>
        <begin position="94"/>
        <end position="124"/>
    </location>
</feature>
<feature type="compositionally biased region" description="Basic residues" evidence="2">
    <location>
        <begin position="100"/>
        <end position="124"/>
    </location>
</feature>
<evidence type="ECO:0000255" key="1">
    <source>
        <dbReference type="HAMAP-Rule" id="MF_01315"/>
    </source>
</evidence>
<evidence type="ECO:0000256" key="2">
    <source>
        <dbReference type="SAM" id="MobiDB-lite"/>
    </source>
</evidence>
<evidence type="ECO:0000305" key="3"/>
<sequence>MARIAGVDIPKNKRGVIALTYIFGLGKSRAIEILEKAQVSQDKKVQDWNDDEIGAIRDAVSFYKIEGELRSEVSLNIKRLMDIGCYRGIRHRSGLPLRGQRTKNNSRTRKGKRKTVANKKKATK</sequence>
<protein>
    <recommendedName>
        <fullName evidence="1">Small ribosomal subunit protein uS13</fullName>
    </recommendedName>
    <alternativeName>
        <fullName evidence="3">30S ribosomal protein S13</fullName>
    </alternativeName>
</protein>
<organism>
    <name type="scientific">Flavobacterium johnsoniae (strain ATCC 17061 / DSM 2064 / JCM 8514 / BCRC 14874 / CCUG 350202 / NBRC 14942 / NCIMB 11054 / UW101)</name>
    <name type="common">Cytophaga johnsonae</name>
    <dbReference type="NCBI Taxonomy" id="376686"/>
    <lineage>
        <taxon>Bacteria</taxon>
        <taxon>Pseudomonadati</taxon>
        <taxon>Bacteroidota</taxon>
        <taxon>Flavobacteriia</taxon>
        <taxon>Flavobacteriales</taxon>
        <taxon>Flavobacteriaceae</taxon>
        <taxon>Flavobacterium</taxon>
    </lineage>
</organism>
<name>RS13_FLAJ1</name>